<comment type="function">
    <text evidence="1">One of the proteins required for the normal export of preproteins out of the cell cytoplasm. It is a molecular chaperone that binds to a subset of precursor proteins, maintaining them in a translocation-competent state. It also specifically binds to its receptor SecA.</text>
</comment>
<comment type="subunit">
    <text evidence="1">Homotetramer, a dimer of dimers. One homotetramer interacts with 1 SecA dimer.</text>
</comment>
<comment type="subcellular location">
    <subcellularLocation>
        <location evidence="1">Cytoplasm</location>
    </subcellularLocation>
</comment>
<comment type="similarity">
    <text evidence="1">Belongs to the SecB family.</text>
</comment>
<keyword id="KW-0143">Chaperone</keyword>
<keyword id="KW-0963">Cytoplasm</keyword>
<keyword id="KW-0653">Protein transport</keyword>
<keyword id="KW-1185">Reference proteome</keyword>
<keyword id="KW-0811">Translocation</keyword>
<keyword id="KW-0813">Transport</keyword>
<proteinExistence type="inferred from homology"/>
<sequence>MTNGNGTPPEAAAPPQLNVLAQYTKDLSFENPNAPASLAPQQSQPAINIQINVGANNLAENEFEVTLSIEGKAESGSTVLFSFELAYAGVFRIVNVPQENLHPLIMIECPRLLFPFAREIIASAVRDGGFPPLMLDPVDFVGLYRQNLERAQQQGQPS</sequence>
<evidence type="ECO:0000255" key="1">
    <source>
        <dbReference type="HAMAP-Rule" id="MF_00821"/>
    </source>
</evidence>
<feature type="chain" id="PRO_1000062504" description="Protein-export protein SecB">
    <location>
        <begin position="1"/>
        <end position="158"/>
    </location>
</feature>
<accession>Q2J350</accession>
<name>SECB_RHOP2</name>
<gene>
    <name evidence="1" type="primary">secB</name>
    <name type="ordered locus">RPB_0399</name>
</gene>
<protein>
    <recommendedName>
        <fullName evidence="1">Protein-export protein SecB</fullName>
    </recommendedName>
</protein>
<reference key="1">
    <citation type="submission" date="2006-01" db="EMBL/GenBank/DDBJ databases">
        <title>Complete sequence of Rhodopseudomonas palustris HaA2.</title>
        <authorList>
            <consortium name="US DOE Joint Genome Institute"/>
            <person name="Copeland A."/>
            <person name="Lucas S."/>
            <person name="Lapidus A."/>
            <person name="Barry K."/>
            <person name="Detter J.C."/>
            <person name="Glavina T."/>
            <person name="Hammon N."/>
            <person name="Israni S."/>
            <person name="Pitluck S."/>
            <person name="Chain P."/>
            <person name="Malfatti S."/>
            <person name="Shin M."/>
            <person name="Vergez L."/>
            <person name="Schmutz J."/>
            <person name="Larimer F."/>
            <person name="Land M."/>
            <person name="Hauser L."/>
            <person name="Pelletier D.A."/>
            <person name="Kyrpides N."/>
            <person name="Anderson I."/>
            <person name="Oda Y."/>
            <person name="Harwood C.S."/>
            <person name="Richardson P."/>
        </authorList>
    </citation>
    <scope>NUCLEOTIDE SEQUENCE [LARGE SCALE GENOMIC DNA]</scope>
    <source>
        <strain>HaA2</strain>
    </source>
</reference>
<dbReference type="EMBL" id="CP000250">
    <property type="protein sequence ID" value="ABD05110.1"/>
    <property type="molecule type" value="Genomic_DNA"/>
</dbReference>
<dbReference type="RefSeq" id="WP_011439300.1">
    <property type="nucleotide sequence ID" value="NC_007778.1"/>
</dbReference>
<dbReference type="SMR" id="Q2J350"/>
<dbReference type="STRING" id="316058.RPB_0399"/>
<dbReference type="KEGG" id="rpb:RPB_0399"/>
<dbReference type="eggNOG" id="COG1952">
    <property type="taxonomic scope" value="Bacteria"/>
</dbReference>
<dbReference type="HOGENOM" id="CLU_111574_0_0_5"/>
<dbReference type="OrthoDB" id="9795145at2"/>
<dbReference type="Proteomes" id="UP000008809">
    <property type="component" value="Chromosome"/>
</dbReference>
<dbReference type="GO" id="GO:0005737">
    <property type="term" value="C:cytoplasm"/>
    <property type="evidence" value="ECO:0007669"/>
    <property type="project" value="UniProtKB-SubCell"/>
</dbReference>
<dbReference type="GO" id="GO:0051082">
    <property type="term" value="F:unfolded protein binding"/>
    <property type="evidence" value="ECO:0007669"/>
    <property type="project" value="InterPro"/>
</dbReference>
<dbReference type="GO" id="GO:0006457">
    <property type="term" value="P:protein folding"/>
    <property type="evidence" value="ECO:0007669"/>
    <property type="project" value="UniProtKB-UniRule"/>
</dbReference>
<dbReference type="GO" id="GO:0051262">
    <property type="term" value="P:protein tetramerization"/>
    <property type="evidence" value="ECO:0007669"/>
    <property type="project" value="InterPro"/>
</dbReference>
<dbReference type="GO" id="GO:0015031">
    <property type="term" value="P:protein transport"/>
    <property type="evidence" value="ECO:0007669"/>
    <property type="project" value="UniProtKB-UniRule"/>
</dbReference>
<dbReference type="Gene3D" id="3.10.420.10">
    <property type="entry name" value="SecB-like"/>
    <property type="match status" value="1"/>
</dbReference>
<dbReference type="HAMAP" id="MF_00821">
    <property type="entry name" value="SecB"/>
    <property type="match status" value="1"/>
</dbReference>
<dbReference type="InterPro" id="IPR003708">
    <property type="entry name" value="SecB"/>
</dbReference>
<dbReference type="InterPro" id="IPR035958">
    <property type="entry name" value="SecB-like_sf"/>
</dbReference>
<dbReference type="NCBIfam" id="NF004392">
    <property type="entry name" value="PRK05751.1-3"/>
    <property type="match status" value="1"/>
</dbReference>
<dbReference type="NCBIfam" id="TIGR00809">
    <property type="entry name" value="secB"/>
    <property type="match status" value="1"/>
</dbReference>
<dbReference type="PANTHER" id="PTHR36918">
    <property type="match status" value="1"/>
</dbReference>
<dbReference type="PANTHER" id="PTHR36918:SF1">
    <property type="entry name" value="PROTEIN-EXPORT PROTEIN SECB"/>
    <property type="match status" value="1"/>
</dbReference>
<dbReference type="Pfam" id="PF02556">
    <property type="entry name" value="SecB"/>
    <property type="match status" value="1"/>
</dbReference>
<dbReference type="PRINTS" id="PR01594">
    <property type="entry name" value="SECBCHAPRONE"/>
</dbReference>
<dbReference type="SUPFAM" id="SSF54611">
    <property type="entry name" value="SecB-like"/>
    <property type="match status" value="1"/>
</dbReference>
<organism>
    <name type="scientific">Rhodopseudomonas palustris (strain HaA2)</name>
    <dbReference type="NCBI Taxonomy" id="316058"/>
    <lineage>
        <taxon>Bacteria</taxon>
        <taxon>Pseudomonadati</taxon>
        <taxon>Pseudomonadota</taxon>
        <taxon>Alphaproteobacteria</taxon>
        <taxon>Hyphomicrobiales</taxon>
        <taxon>Nitrobacteraceae</taxon>
        <taxon>Rhodopseudomonas</taxon>
    </lineage>
</organism>